<keyword id="KW-0067">ATP-binding</keyword>
<keyword id="KW-0963">Cytoplasm</keyword>
<keyword id="KW-0418">Kinase</keyword>
<keyword id="KW-0547">Nucleotide-binding</keyword>
<keyword id="KW-0808">Transferase</keyword>
<feature type="chain" id="PRO_1000100676" description="Cytidylate kinase">
    <location>
        <begin position="1"/>
        <end position="231"/>
    </location>
</feature>
<feature type="binding site" evidence="1">
    <location>
        <begin position="17"/>
        <end position="25"/>
    </location>
    <ligand>
        <name>ATP</name>
        <dbReference type="ChEBI" id="CHEBI:30616"/>
    </ligand>
</feature>
<reference key="1">
    <citation type="submission" date="2008-05" db="EMBL/GenBank/DDBJ databases">
        <title>Complete sequence of chromosome 1 of Ralstonia pickettii 12J.</title>
        <authorList>
            <person name="Lucas S."/>
            <person name="Copeland A."/>
            <person name="Lapidus A."/>
            <person name="Glavina del Rio T."/>
            <person name="Dalin E."/>
            <person name="Tice H."/>
            <person name="Bruce D."/>
            <person name="Goodwin L."/>
            <person name="Pitluck S."/>
            <person name="Meincke L."/>
            <person name="Brettin T."/>
            <person name="Detter J.C."/>
            <person name="Han C."/>
            <person name="Kuske C.R."/>
            <person name="Schmutz J."/>
            <person name="Larimer F."/>
            <person name="Land M."/>
            <person name="Hauser L."/>
            <person name="Kyrpides N."/>
            <person name="Mikhailova N."/>
            <person name="Marsh T."/>
            <person name="Richardson P."/>
        </authorList>
    </citation>
    <scope>NUCLEOTIDE SEQUENCE [LARGE SCALE GENOMIC DNA]</scope>
    <source>
        <strain>12J</strain>
    </source>
</reference>
<gene>
    <name evidence="1" type="primary">cmk</name>
    <name type="ordered locus">Rpic_0778</name>
</gene>
<proteinExistence type="inferred from homology"/>
<name>KCY_RALPJ</name>
<protein>
    <recommendedName>
        <fullName evidence="1">Cytidylate kinase</fullName>
        <shortName evidence="1">CK</shortName>
        <ecNumber evidence="1">2.7.4.25</ecNumber>
    </recommendedName>
    <alternativeName>
        <fullName evidence="1">Cytidine monophosphate kinase</fullName>
        <shortName evidence="1">CMP kinase</shortName>
    </alternativeName>
</protein>
<evidence type="ECO:0000255" key="1">
    <source>
        <dbReference type="HAMAP-Rule" id="MF_00238"/>
    </source>
</evidence>
<dbReference type="EC" id="2.7.4.25" evidence="1"/>
<dbReference type="EMBL" id="CP001068">
    <property type="protein sequence ID" value="ACD25929.1"/>
    <property type="molecule type" value="Genomic_DNA"/>
</dbReference>
<dbReference type="SMR" id="B2U887"/>
<dbReference type="STRING" id="402626.Rpic_0778"/>
<dbReference type="KEGG" id="rpi:Rpic_0778"/>
<dbReference type="eggNOG" id="COG0283">
    <property type="taxonomic scope" value="Bacteria"/>
</dbReference>
<dbReference type="HOGENOM" id="CLU_079959_2_0_4"/>
<dbReference type="GO" id="GO:0005829">
    <property type="term" value="C:cytosol"/>
    <property type="evidence" value="ECO:0007669"/>
    <property type="project" value="TreeGrafter"/>
</dbReference>
<dbReference type="GO" id="GO:0005524">
    <property type="term" value="F:ATP binding"/>
    <property type="evidence" value="ECO:0007669"/>
    <property type="project" value="UniProtKB-UniRule"/>
</dbReference>
<dbReference type="GO" id="GO:0036430">
    <property type="term" value="F:CMP kinase activity"/>
    <property type="evidence" value="ECO:0007669"/>
    <property type="project" value="RHEA"/>
</dbReference>
<dbReference type="GO" id="GO:0036431">
    <property type="term" value="F:dCMP kinase activity"/>
    <property type="evidence" value="ECO:0007669"/>
    <property type="project" value="RHEA"/>
</dbReference>
<dbReference type="GO" id="GO:0015949">
    <property type="term" value="P:nucleobase-containing small molecule interconversion"/>
    <property type="evidence" value="ECO:0007669"/>
    <property type="project" value="TreeGrafter"/>
</dbReference>
<dbReference type="GO" id="GO:0006220">
    <property type="term" value="P:pyrimidine nucleotide metabolic process"/>
    <property type="evidence" value="ECO:0007669"/>
    <property type="project" value="UniProtKB-UniRule"/>
</dbReference>
<dbReference type="CDD" id="cd02020">
    <property type="entry name" value="CMPK"/>
    <property type="match status" value="1"/>
</dbReference>
<dbReference type="Gene3D" id="3.40.50.300">
    <property type="entry name" value="P-loop containing nucleotide triphosphate hydrolases"/>
    <property type="match status" value="1"/>
</dbReference>
<dbReference type="HAMAP" id="MF_00238">
    <property type="entry name" value="Cytidyl_kinase_type1"/>
    <property type="match status" value="1"/>
</dbReference>
<dbReference type="InterPro" id="IPR003136">
    <property type="entry name" value="Cytidylate_kin"/>
</dbReference>
<dbReference type="InterPro" id="IPR011994">
    <property type="entry name" value="Cytidylate_kinase_dom"/>
</dbReference>
<dbReference type="InterPro" id="IPR027417">
    <property type="entry name" value="P-loop_NTPase"/>
</dbReference>
<dbReference type="NCBIfam" id="TIGR00017">
    <property type="entry name" value="cmk"/>
    <property type="match status" value="1"/>
</dbReference>
<dbReference type="PANTHER" id="PTHR21299:SF2">
    <property type="entry name" value="CYTIDYLATE KINASE"/>
    <property type="match status" value="1"/>
</dbReference>
<dbReference type="PANTHER" id="PTHR21299">
    <property type="entry name" value="CYTIDYLATE KINASE/PANTOATE-BETA-ALANINE LIGASE"/>
    <property type="match status" value="1"/>
</dbReference>
<dbReference type="Pfam" id="PF02224">
    <property type="entry name" value="Cytidylate_kin"/>
    <property type="match status" value="1"/>
</dbReference>
<dbReference type="SUPFAM" id="SSF52540">
    <property type="entry name" value="P-loop containing nucleoside triphosphate hydrolases"/>
    <property type="match status" value="1"/>
</dbReference>
<sequence>MSDTAASMPYPVITIDGPTASGKGTVAHQIADLLGFHLLDSGSLYRLVALASMRENIDDHDVESLVRIARELDVRFKADRIWLKGEDVSLALRHESVGNQASAIAVHGAVREALHARQRAFLEAPGLVADGRDMGTVVFPEAVLKVFLTASVQARAERRYKQLIAKGFSATVESLSQDLEARDLRDRTRSVAPLRPAQDARQLDSSDMTVDEVVAQVLDWYRQVQGANKAN</sequence>
<comment type="catalytic activity">
    <reaction evidence="1">
        <text>CMP + ATP = CDP + ADP</text>
        <dbReference type="Rhea" id="RHEA:11600"/>
        <dbReference type="ChEBI" id="CHEBI:30616"/>
        <dbReference type="ChEBI" id="CHEBI:58069"/>
        <dbReference type="ChEBI" id="CHEBI:60377"/>
        <dbReference type="ChEBI" id="CHEBI:456216"/>
        <dbReference type="EC" id="2.7.4.25"/>
    </reaction>
</comment>
<comment type="catalytic activity">
    <reaction evidence="1">
        <text>dCMP + ATP = dCDP + ADP</text>
        <dbReference type="Rhea" id="RHEA:25094"/>
        <dbReference type="ChEBI" id="CHEBI:30616"/>
        <dbReference type="ChEBI" id="CHEBI:57566"/>
        <dbReference type="ChEBI" id="CHEBI:58593"/>
        <dbReference type="ChEBI" id="CHEBI:456216"/>
        <dbReference type="EC" id="2.7.4.25"/>
    </reaction>
</comment>
<comment type="subcellular location">
    <subcellularLocation>
        <location evidence="1">Cytoplasm</location>
    </subcellularLocation>
</comment>
<comment type="similarity">
    <text evidence="1">Belongs to the cytidylate kinase family. Type 1 subfamily.</text>
</comment>
<organism>
    <name type="scientific">Ralstonia pickettii (strain 12J)</name>
    <dbReference type="NCBI Taxonomy" id="402626"/>
    <lineage>
        <taxon>Bacteria</taxon>
        <taxon>Pseudomonadati</taxon>
        <taxon>Pseudomonadota</taxon>
        <taxon>Betaproteobacteria</taxon>
        <taxon>Burkholderiales</taxon>
        <taxon>Burkholderiaceae</taxon>
        <taxon>Ralstonia</taxon>
    </lineage>
</organism>
<accession>B2U887</accession>